<dbReference type="EC" id="2.7.1.148" evidence="1"/>
<dbReference type="EMBL" id="CP000803">
    <property type="protein sequence ID" value="ABU60641.1"/>
    <property type="molecule type" value="Genomic_DNA"/>
</dbReference>
<dbReference type="RefSeq" id="WP_003014135.1">
    <property type="nucleotide sequence ID" value="NC_009749.1"/>
</dbReference>
<dbReference type="SMR" id="A7N9I8"/>
<dbReference type="KEGG" id="fta:FTA_0164"/>
<dbReference type="HOGENOM" id="CLU_053057_3_0_6"/>
<dbReference type="UniPathway" id="UPA00056">
    <property type="reaction ID" value="UER00094"/>
</dbReference>
<dbReference type="GO" id="GO:0050515">
    <property type="term" value="F:4-(cytidine 5'-diphospho)-2-C-methyl-D-erythritol kinase activity"/>
    <property type="evidence" value="ECO:0007669"/>
    <property type="project" value="UniProtKB-UniRule"/>
</dbReference>
<dbReference type="GO" id="GO:0005524">
    <property type="term" value="F:ATP binding"/>
    <property type="evidence" value="ECO:0007669"/>
    <property type="project" value="UniProtKB-UniRule"/>
</dbReference>
<dbReference type="GO" id="GO:0019288">
    <property type="term" value="P:isopentenyl diphosphate biosynthetic process, methylerythritol 4-phosphate pathway"/>
    <property type="evidence" value="ECO:0007669"/>
    <property type="project" value="UniProtKB-UniRule"/>
</dbReference>
<dbReference type="GO" id="GO:0016114">
    <property type="term" value="P:terpenoid biosynthetic process"/>
    <property type="evidence" value="ECO:0007669"/>
    <property type="project" value="InterPro"/>
</dbReference>
<dbReference type="Gene3D" id="3.30.230.10">
    <property type="match status" value="1"/>
</dbReference>
<dbReference type="Gene3D" id="3.30.70.890">
    <property type="entry name" value="GHMP kinase, C-terminal domain"/>
    <property type="match status" value="1"/>
</dbReference>
<dbReference type="HAMAP" id="MF_00061">
    <property type="entry name" value="IspE"/>
    <property type="match status" value="1"/>
</dbReference>
<dbReference type="InterPro" id="IPR013750">
    <property type="entry name" value="GHMP_kinase_C_dom"/>
</dbReference>
<dbReference type="InterPro" id="IPR036554">
    <property type="entry name" value="GHMP_kinase_C_sf"/>
</dbReference>
<dbReference type="InterPro" id="IPR006204">
    <property type="entry name" value="GHMP_kinase_N_dom"/>
</dbReference>
<dbReference type="InterPro" id="IPR004424">
    <property type="entry name" value="IspE"/>
</dbReference>
<dbReference type="InterPro" id="IPR020568">
    <property type="entry name" value="Ribosomal_Su5_D2-typ_SF"/>
</dbReference>
<dbReference type="InterPro" id="IPR014721">
    <property type="entry name" value="Ribsml_uS5_D2-typ_fold_subgr"/>
</dbReference>
<dbReference type="NCBIfam" id="TIGR00154">
    <property type="entry name" value="ispE"/>
    <property type="match status" value="1"/>
</dbReference>
<dbReference type="PANTHER" id="PTHR43527">
    <property type="entry name" value="4-DIPHOSPHOCYTIDYL-2-C-METHYL-D-ERYTHRITOL KINASE, CHLOROPLASTIC"/>
    <property type="match status" value="1"/>
</dbReference>
<dbReference type="PANTHER" id="PTHR43527:SF2">
    <property type="entry name" value="4-DIPHOSPHOCYTIDYL-2-C-METHYL-D-ERYTHRITOL KINASE, CHLOROPLASTIC"/>
    <property type="match status" value="1"/>
</dbReference>
<dbReference type="Pfam" id="PF08544">
    <property type="entry name" value="GHMP_kinases_C"/>
    <property type="match status" value="1"/>
</dbReference>
<dbReference type="Pfam" id="PF00288">
    <property type="entry name" value="GHMP_kinases_N"/>
    <property type="match status" value="1"/>
</dbReference>
<dbReference type="PIRSF" id="PIRSF010376">
    <property type="entry name" value="IspE"/>
    <property type="match status" value="1"/>
</dbReference>
<dbReference type="SUPFAM" id="SSF55060">
    <property type="entry name" value="GHMP Kinase, C-terminal domain"/>
    <property type="match status" value="1"/>
</dbReference>
<dbReference type="SUPFAM" id="SSF54211">
    <property type="entry name" value="Ribosomal protein S5 domain 2-like"/>
    <property type="match status" value="1"/>
</dbReference>
<keyword id="KW-0067">ATP-binding</keyword>
<keyword id="KW-0414">Isoprene biosynthesis</keyword>
<keyword id="KW-0418">Kinase</keyword>
<keyword id="KW-0547">Nucleotide-binding</keyword>
<keyword id="KW-0808">Transferase</keyword>
<sequence>MANIKAKKYYSYAKINLFLHILNKRTDGYHNLQTWFTFLDLKDQLTFSFNNSREINISSNISIAAKQDNLVYKAIKKFQQSYRVQDIGVDIEIKKNIPMGAGLGGGSSNAATTLIALRDYYLPQLSNEEMIPLAVKLGADVPIFVYGKSAWAEGIGEILYHKDFSPQYALLIKPDIHISTKEFFTSEDLIKSSVLISKDLGFDKSIMHNDFENVFYAKYPEFSQYLKELDSDFRMTGTGSCFYLLSADKNKLEQLTRKINKPLDKWLVKTLNYVY</sequence>
<proteinExistence type="inferred from homology"/>
<name>ISPE_FRATF</name>
<organism>
    <name type="scientific">Francisella tularensis subsp. holarctica (strain FTNF002-00 / FTA)</name>
    <dbReference type="NCBI Taxonomy" id="458234"/>
    <lineage>
        <taxon>Bacteria</taxon>
        <taxon>Pseudomonadati</taxon>
        <taxon>Pseudomonadota</taxon>
        <taxon>Gammaproteobacteria</taxon>
        <taxon>Thiotrichales</taxon>
        <taxon>Francisellaceae</taxon>
        <taxon>Francisella</taxon>
    </lineage>
</organism>
<protein>
    <recommendedName>
        <fullName evidence="1">4-diphosphocytidyl-2-C-methyl-D-erythritol kinase</fullName>
        <shortName evidence="1">CMK</shortName>
        <ecNumber evidence="1">2.7.1.148</ecNumber>
    </recommendedName>
    <alternativeName>
        <fullName evidence="1">4-(cytidine-5'-diphospho)-2-C-methyl-D-erythritol kinase</fullName>
    </alternativeName>
</protein>
<feature type="chain" id="PRO_1000007847" description="4-diphosphocytidyl-2-C-methyl-D-erythritol kinase">
    <location>
        <begin position="1"/>
        <end position="275"/>
    </location>
</feature>
<feature type="active site" evidence="1">
    <location>
        <position position="14"/>
    </location>
</feature>
<feature type="active site" evidence="1">
    <location>
        <position position="140"/>
    </location>
</feature>
<feature type="binding site" evidence="1">
    <location>
        <begin position="98"/>
        <end position="108"/>
    </location>
    <ligand>
        <name>ATP</name>
        <dbReference type="ChEBI" id="CHEBI:30616"/>
    </ligand>
</feature>
<gene>
    <name evidence="1" type="primary">ispE</name>
    <name type="ordered locus">FTA_0164</name>
</gene>
<accession>A7N9I8</accession>
<reference key="1">
    <citation type="journal article" date="2009" name="PLoS ONE">
        <title>Complete genome sequence of Francisella tularensis subspecies holarctica FTNF002-00.</title>
        <authorList>
            <person name="Barabote R.D."/>
            <person name="Xie G."/>
            <person name="Brettin T.S."/>
            <person name="Hinrichs S.H."/>
            <person name="Fey P.D."/>
            <person name="Jay J.J."/>
            <person name="Engle J.L."/>
            <person name="Godbole S.D."/>
            <person name="Noronha J.M."/>
            <person name="Scheuermann R.H."/>
            <person name="Zhou L.W."/>
            <person name="Lion C."/>
            <person name="Dempsey M.P."/>
        </authorList>
    </citation>
    <scope>NUCLEOTIDE SEQUENCE [LARGE SCALE GENOMIC DNA]</scope>
    <source>
        <strain>FTNF002-00 / FTA</strain>
    </source>
</reference>
<comment type="function">
    <text evidence="1">Catalyzes the phosphorylation of the position 2 hydroxy group of 4-diphosphocytidyl-2C-methyl-D-erythritol.</text>
</comment>
<comment type="catalytic activity">
    <reaction evidence="1">
        <text>4-CDP-2-C-methyl-D-erythritol + ATP = 4-CDP-2-C-methyl-D-erythritol 2-phosphate + ADP + H(+)</text>
        <dbReference type="Rhea" id="RHEA:18437"/>
        <dbReference type="ChEBI" id="CHEBI:15378"/>
        <dbReference type="ChEBI" id="CHEBI:30616"/>
        <dbReference type="ChEBI" id="CHEBI:57823"/>
        <dbReference type="ChEBI" id="CHEBI:57919"/>
        <dbReference type="ChEBI" id="CHEBI:456216"/>
        <dbReference type="EC" id="2.7.1.148"/>
    </reaction>
</comment>
<comment type="pathway">
    <text evidence="1">Isoprenoid biosynthesis; isopentenyl diphosphate biosynthesis via DXP pathway; isopentenyl diphosphate from 1-deoxy-D-xylulose 5-phosphate: step 3/6.</text>
</comment>
<comment type="similarity">
    <text evidence="1">Belongs to the GHMP kinase family. IspE subfamily.</text>
</comment>
<evidence type="ECO:0000255" key="1">
    <source>
        <dbReference type="HAMAP-Rule" id="MF_00061"/>
    </source>
</evidence>